<keyword id="KW-0687">Ribonucleoprotein</keyword>
<keyword id="KW-0689">Ribosomal protein</keyword>
<reference key="1">
    <citation type="submission" date="2007-05" db="EMBL/GenBank/DDBJ databases">
        <title>Complete sequence of chromosome of Psychrobacter sp. PRwf-1.</title>
        <authorList>
            <consortium name="US DOE Joint Genome Institute"/>
            <person name="Copeland A."/>
            <person name="Lucas S."/>
            <person name="Lapidus A."/>
            <person name="Barry K."/>
            <person name="Detter J.C."/>
            <person name="Glavina del Rio T."/>
            <person name="Hammon N."/>
            <person name="Israni S."/>
            <person name="Dalin E."/>
            <person name="Tice H."/>
            <person name="Pitluck S."/>
            <person name="Chain P."/>
            <person name="Malfatti S."/>
            <person name="Shin M."/>
            <person name="Vergez L."/>
            <person name="Schmutz J."/>
            <person name="Larimer F."/>
            <person name="Land M."/>
            <person name="Hauser L."/>
            <person name="Kyrpides N."/>
            <person name="Kim E."/>
            <person name="Tiedje J."/>
            <person name="Richardson P."/>
        </authorList>
    </citation>
    <scope>NUCLEOTIDE SEQUENCE [LARGE SCALE GENOMIC DNA]</scope>
    <source>
        <strain>PRwf-1</strain>
    </source>
</reference>
<sequence>MKTQSAKPAEVTHDWYIVDAEGKTLGRLATQIAARLRGKHKPSFTPHVDTGDYIVVINADKIAVTGKKAQDKKYYRHSGYPGGIKETNFTKLIAHKPEEVLLKAVKGMLPKGPLGYATIKKLKLYAGTEHPHAAQQPKELDI</sequence>
<protein>
    <recommendedName>
        <fullName evidence="1">Large ribosomal subunit protein uL13</fullName>
    </recommendedName>
    <alternativeName>
        <fullName evidence="2">50S ribosomal protein L13</fullName>
    </alternativeName>
</protein>
<accession>A5WDK9</accession>
<feature type="chain" id="PRO_1000073415" description="Large ribosomal subunit protein uL13">
    <location>
        <begin position="1"/>
        <end position="142"/>
    </location>
</feature>
<name>RL13_PSYWF</name>
<evidence type="ECO:0000255" key="1">
    <source>
        <dbReference type="HAMAP-Rule" id="MF_01366"/>
    </source>
</evidence>
<evidence type="ECO:0000305" key="2"/>
<gene>
    <name evidence="1" type="primary">rplM</name>
    <name type="ordered locus">PsycPRwf_0798</name>
</gene>
<dbReference type="EMBL" id="CP000713">
    <property type="protein sequence ID" value="ABQ93750.1"/>
    <property type="molecule type" value="Genomic_DNA"/>
</dbReference>
<dbReference type="SMR" id="A5WDK9"/>
<dbReference type="STRING" id="349106.PsycPRwf_0798"/>
<dbReference type="KEGG" id="prw:PsycPRwf_0798"/>
<dbReference type="eggNOG" id="COG0102">
    <property type="taxonomic scope" value="Bacteria"/>
</dbReference>
<dbReference type="HOGENOM" id="CLU_082184_2_2_6"/>
<dbReference type="GO" id="GO:0022625">
    <property type="term" value="C:cytosolic large ribosomal subunit"/>
    <property type="evidence" value="ECO:0007669"/>
    <property type="project" value="TreeGrafter"/>
</dbReference>
<dbReference type="GO" id="GO:0003729">
    <property type="term" value="F:mRNA binding"/>
    <property type="evidence" value="ECO:0007669"/>
    <property type="project" value="TreeGrafter"/>
</dbReference>
<dbReference type="GO" id="GO:0003735">
    <property type="term" value="F:structural constituent of ribosome"/>
    <property type="evidence" value="ECO:0007669"/>
    <property type="project" value="InterPro"/>
</dbReference>
<dbReference type="GO" id="GO:0017148">
    <property type="term" value="P:negative regulation of translation"/>
    <property type="evidence" value="ECO:0007669"/>
    <property type="project" value="TreeGrafter"/>
</dbReference>
<dbReference type="GO" id="GO:0006412">
    <property type="term" value="P:translation"/>
    <property type="evidence" value="ECO:0007669"/>
    <property type="project" value="UniProtKB-UniRule"/>
</dbReference>
<dbReference type="CDD" id="cd00392">
    <property type="entry name" value="Ribosomal_L13"/>
    <property type="match status" value="1"/>
</dbReference>
<dbReference type="FunFam" id="3.90.1180.10:FF:000001">
    <property type="entry name" value="50S ribosomal protein L13"/>
    <property type="match status" value="1"/>
</dbReference>
<dbReference type="Gene3D" id="3.90.1180.10">
    <property type="entry name" value="Ribosomal protein L13"/>
    <property type="match status" value="1"/>
</dbReference>
<dbReference type="HAMAP" id="MF_01366">
    <property type="entry name" value="Ribosomal_uL13"/>
    <property type="match status" value="1"/>
</dbReference>
<dbReference type="InterPro" id="IPR005822">
    <property type="entry name" value="Ribosomal_uL13"/>
</dbReference>
<dbReference type="InterPro" id="IPR005823">
    <property type="entry name" value="Ribosomal_uL13_bac-type"/>
</dbReference>
<dbReference type="InterPro" id="IPR036899">
    <property type="entry name" value="Ribosomal_uL13_sf"/>
</dbReference>
<dbReference type="NCBIfam" id="TIGR01066">
    <property type="entry name" value="rplM_bact"/>
    <property type="match status" value="1"/>
</dbReference>
<dbReference type="PANTHER" id="PTHR11545:SF2">
    <property type="entry name" value="LARGE RIBOSOMAL SUBUNIT PROTEIN UL13M"/>
    <property type="match status" value="1"/>
</dbReference>
<dbReference type="PANTHER" id="PTHR11545">
    <property type="entry name" value="RIBOSOMAL PROTEIN L13"/>
    <property type="match status" value="1"/>
</dbReference>
<dbReference type="Pfam" id="PF00572">
    <property type="entry name" value="Ribosomal_L13"/>
    <property type="match status" value="1"/>
</dbReference>
<dbReference type="PIRSF" id="PIRSF002181">
    <property type="entry name" value="Ribosomal_L13"/>
    <property type="match status" value="1"/>
</dbReference>
<dbReference type="SUPFAM" id="SSF52161">
    <property type="entry name" value="Ribosomal protein L13"/>
    <property type="match status" value="1"/>
</dbReference>
<proteinExistence type="inferred from homology"/>
<comment type="function">
    <text evidence="1">This protein is one of the early assembly proteins of the 50S ribosomal subunit, although it is not seen to bind rRNA by itself. It is important during the early stages of 50S assembly.</text>
</comment>
<comment type="subunit">
    <text evidence="1">Part of the 50S ribosomal subunit.</text>
</comment>
<comment type="similarity">
    <text evidence="1">Belongs to the universal ribosomal protein uL13 family.</text>
</comment>
<organism>
    <name type="scientific">Psychrobacter sp. (strain PRwf-1)</name>
    <dbReference type="NCBI Taxonomy" id="349106"/>
    <lineage>
        <taxon>Bacteria</taxon>
        <taxon>Pseudomonadati</taxon>
        <taxon>Pseudomonadota</taxon>
        <taxon>Gammaproteobacteria</taxon>
        <taxon>Moraxellales</taxon>
        <taxon>Moraxellaceae</taxon>
        <taxon>Psychrobacter</taxon>
    </lineage>
</organism>